<protein>
    <recommendedName>
        <fullName>E3 ubiquitin-protein ligase SH3RF1</fullName>
        <ecNumber evidence="9 14 15">2.3.2.27</ecNumber>
    </recommendedName>
    <alternativeName>
        <fullName>Plenty of SH3s</fullName>
        <shortName>Protein POSH</shortName>
    </alternativeName>
    <alternativeName>
        <fullName>RING finger protein 142</fullName>
    </alternativeName>
    <alternativeName>
        <fullName evidence="18">RING-type E3 ubiquitin transferase SH3RF1</fullName>
    </alternativeName>
    <alternativeName>
        <fullName>SH3 domain-containing RING finger protein 1</fullName>
    </alternativeName>
    <alternativeName>
        <fullName>SH3 multiple domains protein 2</fullName>
    </alternativeName>
</protein>
<gene>
    <name type="primary">SH3RF1</name>
    <name type="synonym">KIAA1494</name>
    <name type="synonym">POSH</name>
    <name evidence="17" type="synonym">POSH1</name>
    <name type="synonym">RNF142</name>
    <name type="synonym">SH3MD2</name>
</gene>
<evidence type="ECO:0000250" key="1"/>
<evidence type="ECO:0000250" key="2">
    <source>
        <dbReference type="UniProtKB" id="Q69ZI1"/>
    </source>
</evidence>
<evidence type="ECO:0000250" key="3">
    <source>
        <dbReference type="UniProtKB" id="Q71F54"/>
    </source>
</evidence>
<evidence type="ECO:0000255" key="4">
    <source>
        <dbReference type="PROSITE-ProRule" id="PRU00175"/>
    </source>
</evidence>
<evidence type="ECO:0000255" key="5">
    <source>
        <dbReference type="PROSITE-ProRule" id="PRU00192"/>
    </source>
</evidence>
<evidence type="ECO:0000256" key="6">
    <source>
        <dbReference type="SAM" id="MobiDB-lite"/>
    </source>
</evidence>
<evidence type="ECO:0000269" key="7">
    <source>
    </source>
</evidence>
<evidence type="ECO:0000269" key="8">
    <source>
    </source>
</evidence>
<evidence type="ECO:0000269" key="9">
    <source>
    </source>
</evidence>
<evidence type="ECO:0000269" key="10">
    <source>
    </source>
</evidence>
<evidence type="ECO:0000269" key="11">
    <source>
    </source>
</evidence>
<evidence type="ECO:0000269" key="12">
    <source>
    </source>
</evidence>
<evidence type="ECO:0000269" key="13">
    <source>
    </source>
</evidence>
<evidence type="ECO:0000269" key="14">
    <source>
    </source>
</evidence>
<evidence type="ECO:0000269" key="15">
    <source>
    </source>
</evidence>
<evidence type="ECO:0000303" key="16">
    <source>
    </source>
</evidence>
<evidence type="ECO:0000303" key="17">
    <source>
    </source>
</evidence>
<evidence type="ECO:0000305" key="18"/>
<evidence type="ECO:0007744" key="19">
    <source>
    </source>
</evidence>
<evidence type="ECO:0007744" key="20">
    <source>
    </source>
</evidence>
<name>SH3R1_HUMAN</name>
<reference key="1">
    <citation type="journal article" date="2004" name="Genome Res.">
        <title>The status, quality, and expansion of the NIH full-length cDNA project: the Mammalian Gene Collection (MGC).</title>
        <authorList>
            <consortium name="The MGC Project Team"/>
        </authorList>
    </citation>
    <scope>NUCLEOTIDE SEQUENCE [LARGE SCALE MRNA] (ISOFORM 1)</scope>
    <scope>NUCLEOTIDE SEQUENCE [LARGE SCALE MRNA] OF 140-888 (ISOFORM 2)</scope>
    <source>
        <tissue>Eye</tissue>
        <tissue>Ovary</tissue>
    </source>
</reference>
<reference key="2">
    <citation type="journal article" date="2004" name="Nat. Genet.">
        <title>Complete sequencing and characterization of 21,243 full-length human cDNAs.</title>
        <authorList>
            <person name="Ota T."/>
            <person name="Suzuki Y."/>
            <person name="Nishikawa T."/>
            <person name="Otsuki T."/>
            <person name="Sugiyama T."/>
            <person name="Irie R."/>
            <person name="Wakamatsu A."/>
            <person name="Hayashi K."/>
            <person name="Sato H."/>
            <person name="Nagai K."/>
            <person name="Kimura K."/>
            <person name="Makita H."/>
            <person name="Sekine M."/>
            <person name="Obayashi M."/>
            <person name="Nishi T."/>
            <person name="Shibahara T."/>
            <person name="Tanaka T."/>
            <person name="Ishii S."/>
            <person name="Yamamoto J."/>
            <person name="Saito K."/>
            <person name="Kawai Y."/>
            <person name="Isono Y."/>
            <person name="Nakamura Y."/>
            <person name="Nagahari K."/>
            <person name="Murakami K."/>
            <person name="Yasuda T."/>
            <person name="Iwayanagi T."/>
            <person name="Wagatsuma M."/>
            <person name="Shiratori A."/>
            <person name="Sudo H."/>
            <person name="Hosoiri T."/>
            <person name="Kaku Y."/>
            <person name="Kodaira H."/>
            <person name="Kondo H."/>
            <person name="Sugawara M."/>
            <person name="Takahashi M."/>
            <person name="Kanda K."/>
            <person name="Yokoi T."/>
            <person name="Furuya T."/>
            <person name="Kikkawa E."/>
            <person name="Omura Y."/>
            <person name="Abe K."/>
            <person name="Kamihara K."/>
            <person name="Katsuta N."/>
            <person name="Sato K."/>
            <person name="Tanikawa M."/>
            <person name="Yamazaki M."/>
            <person name="Ninomiya K."/>
            <person name="Ishibashi T."/>
            <person name="Yamashita H."/>
            <person name="Murakawa K."/>
            <person name="Fujimori K."/>
            <person name="Tanai H."/>
            <person name="Kimata M."/>
            <person name="Watanabe M."/>
            <person name="Hiraoka S."/>
            <person name="Chiba Y."/>
            <person name="Ishida S."/>
            <person name="Ono Y."/>
            <person name="Takiguchi S."/>
            <person name="Watanabe S."/>
            <person name="Yosida M."/>
            <person name="Hotuta T."/>
            <person name="Kusano J."/>
            <person name="Kanehori K."/>
            <person name="Takahashi-Fujii A."/>
            <person name="Hara H."/>
            <person name="Tanase T.-O."/>
            <person name="Nomura Y."/>
            <person name="Togiya S."/>
            <person name="Komai F."/>
            <person name="Hara R."/>
            <person name="Takeuchi K."/>
            <person name="Arita M."/>
            <person name="Imose N."/>
            <person name="Musashino K."/>
            <person name="Yuuki H."/>
            <person name="Oshima A."/>
            <person name="Sasaki N."/>
            <person name="Aotsuka S."/>
            <person name="Yoshikawa Y."/>
            <person name="Matsunawa H."/>
            <person name="Ichihara T."/>
            <person name="Shiohata N."/>
            <person name="Sano S."/>
            <person name="Moriya S."/>
            <person name="Momiyama H."/>
            <person name="Satoh N."/>
            <person name="Takami S."/>
            <person name="Terashima Y."/>
            <person name="Suzuki O."/>
            <person name="Nakagawa S."/>
            <person name="Senoh A."/>
            <person name="Mizoguchi H."/>
            <person name="Goto Y."/>
            <person name="Shimizu F."/>
            <person name="Wakebe H."/>
            <person name="Hishigaki H."/>
            <person name="Watanabe T."/>
            <person name="Sugiyama A."/>
            <person name="Takemoto M."/>
            <person name="Kawakami B."/>
            <person name="Yamazaki M."/>
            <person name="Watanabe K."/>
            <person name="Kumagai A."/>
            <person name="Itakura S."/>
            <person name="Fukuzumi Y."/>
            <person name="Fujimori Y."/>
            <person name="Komiyama M."/>
            <person name="Tashiro H."/>
            <person name="Tanigami A."/>
            <person name="Fujiwara T."/>
            <person name="Ono T."/>
            <person name="Yamada K."/>
            <person name="Fujii Y."/>
            <person name="Ozaki K."/>
            <person name="Hirao M."/>
            <person name="Ohmori Y."/>
            <person name="Kawabata A."/>
            <person name="Hikiji T."/>
            <person name="Kobatake N."/>
            <person name="Inagaki H."/>
            <person name="Ikema Y."/>
            <person name="Okamoto S."/>
            <person name="Okitani R."/>
            <person name="Kawakami T."/>
            <person name="Noguchi S."/>
            <person name="Itoh T."/>
            <person name="Shigeta K."/>
            <person name="Senba T."/>
            <person name="Matsumura K."/>
            <person name="Nakajima Y."/>
            <person name="Mizuno T."/>
            <person name="Morinaga M."/>
            <person name="Sasaki M."/>
            <person name="Togashi T."/>
            <person name="Oyama M."/>
            <person name="Hata H."/>
            <person name="Watanabe M."/>
            <person name="Komatsu T."/>
            <person name="Mizushima-Sugano J."/>
            <person name="Satoh T."/>
            <person name="Shirai Y."/>
            <person name="Takahashi Y."/>
            <person name="Nakagawa K."/>
            <person name="Okumura K."/>
            <person name="Nagase T."/>
            <person name="Nomura N."/>
            <person name="Kikuchi H."/>
            <person name="Masuho Y."/>
            <person name="Yamashita R."/>
            <person name="Nakai K."/>
            <person name="Yada T."/>
            <person name="Nakamura Y."/>
            <person name="Ohara O."/>
            <person name="Isogai T."/>
            <person name="Sugano S."/>
        </authorList>
    </citation>
    <scope>NUCLEOTIDE SEQUENCE [LARGE SCALE MRNA] OF 1-712 (ISOFORM 1)</scope>
    <source>
        <tissue>Embryo</tissue>
    </source>
</reference>
<reference key="3">
    <citation type="journal article" date="2000" name="DNA Res.">
        <title>Prediction of the coding sequences of unidentified human genes. XVII. The complete sequences of 100 new cDNA clones from brain which code for large proteins in vitro.</title>
        <authorList>
            <person name="Nagase T."/>
            <person name="Kikuno R."/>
            <person name="Ishikawa K."/>
            <person name="Hirosawa M."/>
            <person name="Ohara O."/>
        </authorList>
    </citation>
    <scope>NUCLEOTIDE SEQUENCE [LARGE SCALE MRNA] OF 251-888 (ISOFORM 1)</scope>
    <source>
        <tissue>Brain</tissue>
    </source>
</reference>
<reference key="4">
    <citation type="journal article" date="2003" name="EMBO J.">
        <title>POSH acts as a scaffold for a multiprotein complex that mediates JNK activation in apoptosis.</title>
        <authorList>
            <person name="Xu Z."/>
            <person name="Kukekov N.V."/>
            <person name="Greene L.A."/>
        </authorList>
    </citation>
    <scope>INTERACTION WITH MAP3K10; MAP3K11; DLK1; MAP2K4; MAP2K7; MAPK8 AND MAPK9</scope>
</reference>
<reference key="5">
    <citation type="journal article" date="2003" name="J. Biol. Chem.">
        <title>Akt2 negatively regulates assembly of the POSH-MLK-JNK signaling complex.</title>
        <authorList>
            <person name="Figueroa C."/>
            <person name="Tarras S."/>
            <person name="Taylor J."/>
            <person name="Vojtek A.B."/>
        </authorList>
    </citation>
    <scope>INTERACTION WITH AKT1 AND AKT2</scope>
</reference>
<reference key="6">
    <citation type="journal article" date="2005" name="Proc. Natl. Acad. Sci. U.S.A.">
        <title>The trans-Golgi network-associated human ubiquitin-protein ligase POSH is essential for HIV type 1 production.</title>
        <authorList>
            <person name="Alroy I."/>
            <person name="Tuvia S."/>
            <person name="Greener T."/>
            <person name="Gordon D."/>
            <person name="Barr H.M."/>
            <person name="Taglicht D."/>
            <person name="Mandil-Levin R."/>
            <person name="Ben-Avraham D."/>
            <person name="Konforty D."/>
            <person name="Nir A."/>
            <person name="Levius O."/>
            <person name="Bicoviski V."/>
            <person name="Dori M."/>
            <person name="Cohen S."/>
            <person name="Yaar L."/>
            <person name="Erez O."/>
            <person name="Propheta-Meiran O."/>
            <person name="Koskas M."/>
            <person name="Caspi-Bachar E."/>
            <person name="Alchanati I."/>
            <person name="Sela-Brown A."/>
            <person name="Moskowitz H."/>
            <person name="Tessmer U."/>
            <person name="Schubert U."/>
            <person name="Reiss Y."/>
        </authorList>
    </citation>
    <scope>FUNCTION AS AN E3 UBIQUITIN-PROTEIN LIGASE</scope>
    <scope>CATALYTIC ACTIVITY</scope>
    <scope>FUNCTION (MICROBIAL INFECTION)</scope>
    <scope>SUBCELLULAR LOCATION</scope>
    <scope>SELF-UBIQUITINATION</scope>
</reference>
<reference key="7">
    <citation type="journal article" date="2006" name="J. Biol. Chem.">
        <title>Siah1 interacts with the scaffold protein POSH to promote JNK activation and apoptosis.</title>
        <authorList>
            <person name="Xu Z."/>
            <person name="Sproul A."/>
            <person name="Wang W."/>
            <person name="Kukekov N."/>
            <person name="Greene L.A."/>
        </authorList>
    </citation>
    <scope>INTERACTION WITH SIAH1</scope>
</reference>
<reference key="8">
    <citation type="journal article" date="2006" name="J. Biol. Chem.">
        <title>Direct interaction of the molecular scaffolds POSH and JIP is required for apoptotic activation of JNKs.</title>
        <authorList>
            <person name="Kukekov N.V."/>
            <person name="Xu Z."/>
            <person name="Greene L.A."/>
        </authorList>
    </citation>
    <scope>INTERACTION WITH MAPK8IP</scope>
</reference>
<reference key="9">
    <citation type="journal article" date="2007" name="J. Biol. Chem.">
        <title>Regulation of the pro-apoptotic scaffolding protein POSH by Akt.</title>
        <authorList>
            <person name="Lyons T.R."/>
            <person name="Thorburn J."/>
            <person name="Ryan P.W."/>
            <person name="Thorburn A."/>
            <person name="Anderson S.M."/>
            <person name="Kassenbrock C.K."/>
        </authorList>
    </citation>
    <scope>INTERACTION WITH AKT1 AND AKT2</scope>
    <scope>PHOSPHORYLATION AT SER-304</scope>
    <scope>MUTAGENESIS OF SER-304</scope>
    <scope>IDENTIFICATION BY MASS SPECTROMETRY</scope>
</reference>
<reference key="10">
    <citation type="journal article" date="2007" name="J. Cell Biol.">
        <title>The ubiquitin E3 ligase POSH regulates calcium homeostasis through spatial control of Herp.</title>
        <authorList>
            <person name="Tuvia S."/>
            <person name="Taglicht D."/>
            <person name="Erez O."/>
            <person name="Alroy I."/>
            <person name="Alchanati I."/>
            <person name="Bicoviski V."/>
            <person name="Dori-Bachash M."/>
            <person name="Ben-Avraham D."/>
            <person name="Reiss Y."/>
        </authorList>
    </citation>
    <scope>INTERACTION WITH HERP1</scope>
    <scope>SUBCELLULAR LOCATION</scope>
    <scope>MUTAGENESIS OF VAL-14</scope>
</reference>
<reference key="11">
    <citation type="journal article" date="2009" name="J. Biol. Chem.">
        <title>POSH stimulates the ubiquitination and the clathrin-independent endocytosis of ROMK1 channels.</title>
        <authorList>
            <person name="Lin D.H."/>
            <person name="Yue P."/>
            <person name="Pan C.Y."/>
            <person name="Sun P."/>
            <person name="Zhang X."/>
            <person name="Han Z."/>
            <person name="Roos M."/>
            <person name="Caplan M."/>
            <person name="Giebisch G."/>
            <person name="Wang W.H."/>
        </authorList>
    </citation>
    <scope>FUNCTION AS AN E3 UBIQUITIN-PROTEIN LIGASE</scope>
    <scope>CATALYTIC ACTIVITY</scope>
</reference>
<reference key="12">
    <citation type="journal article" date="2010" name="FEBS Lett.">
        <title>POSH2 is a RING finger E3 ligase with Rac1 binding activity through a partial CRIB domain.</title>
        <authorList>
            <person name="Kaerkkaeinen S."/>
            <person name="van der Linden M."/>
            <person name="Renkema G.H."/>
        </authorList>
    </citation>
    <scope>FUNCTION AS AN E3 UBIQUITIN-PROTEIN LIGASE</scope>
    <scope>CATALYTIC ACTIVITY</scope>
    <scope>AUTOUBIQUITINATION</scope>
    <scope>MUTAGENESIS OF CYS-28 AND HIS-30</scope>
    <scope>INTERACTION WITH RAC1</scope>
</reference>
<reference key="13">
    <citation type="journal article" date="2010" name="Sci. Signal.">
        <title>Quantitative phosphoproteomics reveals widespread full phosphorylation site occupancy during mitosis.</title>
        <authorList>
            <person name="Olsen J.V."/>
            <person name="Vermeulen M."/>
            <person name="Santamaria A."/>
            <person name="Kumar C."/>
            <person name="Miller M.L."/>
            <person name="Jensen L.J."/>
            <person name="Gnad F."/>
            <person name="Cox J."/>
            <person name="Jensen T.S."/>
            <person name="Nigg E.A."/>
            <person name="Brunak S."/>
            <person name="Mann M."/>
        </authorList>
    </citation>
    <scope>PHOSPHORYLATION [LARGE SCALE ANALYSIS] AT SER-304</scope>
    <scope>IDENTIFICATION BY MASS SPECTROMETRY [LARGE SCALE ANALYSIS]</scope>
    <source>
        <tissue>Cervix carcinoma</tissue>
    </source>
</reference>
<reference key="14">
    <citation type="journal article" date="2013" name="J. Proteome Res.">
        <title>Toward a comprehensive characterization of a human cancer cell phosphoproteome.</title>
        <authorList>
            <person name="Zhou H."/>
            <person name="Di Palma S."/>
            <person name="Preisinger C."/>
            <person name="Peng M."/>
            <person name="Polat A.N."/>
            <person name="Heck A.J."/>
            <person name="Mohammed S."/>
        </authorList>
    </citation>
    <scope>PHOSPHORYLATION [LARGE SCALE ANALYSIS] AT SER-304 AND SER-532</scope>
    <scope>IDENTIFICATION BY MASS SPECTROMETRY [LARGE SCALE ANALYSIS]</scope>
    <source>
        <tissue>Cervix carcinoma</tissue>
    </source>
</reference>
<reference key="15">
    <citation type="journal article" date="2014" name="J. Proteomics">
        <title>An enzyme assisted RP-RPLC approach for in-depth analysis of human liver phosphoproteome.</title>
        <authorList>
            <person name="Bian Y."/>
            <person name="Song C."/>
            <person name="Cheng K."/>
            <person name="Dong M."/>
            <person name="Wang F."/>
            <person name="Huang J."/>
            <person name="Sun D."/>
            <person name="Wang L."/>
            <person name="Ye M."/>
            <person name="Zou H."/>
        </authorList>
    </citation>
    <scope>IDENTIFICATION BY MASS SPECTROMETRY [LARGE SCALE ANALYSIS]</scope>
    <source>
        <tissue>Liver</tissue>
    </source>
</reference>
<accession>Q7Z6J0</accession>
<accession>Q05BT2</accession>
<accession>Q8IW46</accession>
<accession>Q9HAM2</accession>
<accession>Q9P234</accession>
<proteinExistence type="evidence at protein level"/>
<comment type="function">
    <text evidence="2 9 14 15">Has E3 ubiquitin-protein ligase activity. In the absence of an external substrate, it can catalyze self-ubiquitination (PubMed:15659549, PubMed:20696164). Stimulates ubiquitination of potassium channel KCNJ1, enhancing it's dynamin-dependent and clathrin-independent endocytosis (PubMed:19710010). Acts as a scaffold protein that coordinates with MAPK8IP1/JIP1 in organizing different components of the JNK pathway, including RAC1 or RAC2, MAP3K11/MLK3 or MAP3K7/TAK1, MAP2K7/MKK7, MAPK8/JNK1 and/or MAPK9/JNK2 into a functional multiprotein complex to ensure the effective activation of the JNK signaling pathway. Regulates the differentiation of CD4(+) and CD8(+) T-cells and promotes T-helper 1 (Th1) cell differentiation. Regulates the activation of MAPK8/JNK1 and MAPK9/JNK2 in CD4(+) T-cells and the activation of MAPK8/JNK1 in CD8(+) T-cells. Plays a crucial role in the migration of neocortical neurons in the developing brain. Controls proper cortical neuronal migration and the formation of proximal cytoplasmic dilation in the leading process (PCDLP) in migratory neocortical neurons by regulating the proper localization of activated RAC1 and F-actin assembly (By similarity).</text>
</comment>
<comment type="function">
    <text evidence="9">(Microbial infection) Plays an essential role in the targeting of HIV-1 Gag to the plasma membrane, this function is dependent on it's RING domain, and hence it's E3 ligase activity.</text>
</comment>
<comment type="catalytic activity">
    <reaction evidence="9 14 15">
        <text>S-ubiquitinyl-[E2 ubiquitin-conjugating enzyme]-L-cysteine + [acceptor protein]-L-lysine = [E2 ubiquitin-conjugating enzyme]-L-cysteine + N(6)-ubiquitinyl-[acceptor protein]-L-lysine.</text>
        <dbReference type="EC" id="2.3.2.27"/>
    </reaction>
</comment>
<comment type="pathway">
    <text>Protein modification; protein ubiquitination.</text>
</comment>
<comment type="subunit">
    <text evidence="2 3 7 8 10 11 12 13 15">Interacts with RAC1; in a GTP-dependent manner (PubMed:20696164). Interacts with MAP3K10/MLK2 and MAP3K11/MLK3. Interacts with MAPK8IP; this interaction leads to the PJAC complex (POSH-JIP or SH3RF1/MAPK8IP apoptotic complex) with a 1:1 ratio. Interacts with SIAH1. Interacts with HERP1. Probably part of a signaling complex that may contain SH3RF1, MAPK8IP, DLK1, MAP2K4/MKK4, MAP2K7/MKK7, MAPK8/JNK1, MAPK9/JNK2, AKT1 and AKT2 (PubMed:12514131, PubMed:14504284, PubMed:16230351, PubMed:16571722, PubMed:17420289, PubMed:17535800). Found in a complex with RAC2, MAP3K7/TAK1, MAP2K7/MKK7, MAPK8IP1/JIP1, MAPK8/JNK1 and MAPK9/JNK2. Found in a complex with RAC1, MAP3K11/MLK3, MAP2K7/MKK7, MAPK8IP1/JIP1 and MAPK8/JNK1. Interacts with SH3RF2 (By similarity).</text>
</comment>
<comment type="interaction">
    <interactant intactId="EBI-311339">
        <id>Q7Z6J0</id>
    </interactant>
    <interactant intactId="EBI-413628">
        <id>P63000</id>
        <label>RAC1</label>
    </interactant>
    <organismsDiffer>false</organismsDiffer>
    <experiments>2</experiments>
</comment>
<comment type="interaction">
    <interactant intactId="EBI-311339">
        <id>Q7Z6J0</id>
    </interactant>
    <interactant intactId="EBI-476295">
        <id>P31947</id>
        <label>SFN</label>
    </interactant>
    <organismsDiffer>false</organismsDiffer>
    <experiments>2</experiments>
</comment>
<comment type="interaction">
    <interactant intactId="EBI-311339">
        <id>Q7Z6J0</id>
    </interactant>
    <interactant intactId="EBI-948141">
        <id>O43255</id>
        <label>SIAH2</label>
    </interactant>
    <organismsDiffer>false</organismsDiffer>
    <experiments>3</experiments>
</comment>
<comment type="interaction">
    <interactant intactId="EBI-311339">
        <id>Q7Z6J0</id>
    </interactant>
    <interactant intactId="EBI-356498">
        <id>P62258</id>
        <label>YWHAE</label>
    </interactant>
    <organismsDiffer>false</organismsDiffer>
    <experiments>3</experiments>
</comment>
<comment type="subcellular location">
    <subcellularLocation>
        <location evidence="3">Cytoplasm</location>
        <location evidence="3">Perinuclear region</location>
    </subcellularLocation>
    <subcellularLocation>
        <location evidence="2">Cell projection</location>
        <location evidence="2">Lamellipodium</location>
    </subcellularLocation>
    <subcellularLocation>
        <location evidence="9 12">Golgi apparatus</location>
        <location evidence="9 12">trans-Golgi network</location>
    </subcellularLocation>
    <text evidence="2 12">Colocalizes, with AKT2, in lamellipodia (By similarity). Colocalizes, with HERP1, in trans-Golgi network.</text>
</comment>
<comment type="alternative products">
    <event type="alternative splicing"/>
    <isoform>
        <id>Q7Z6J0-1</id>
        <name>1</name>
        <sequence type="displayed"/>
    </isoform>
    <isoform>
        <id>Q7Z6J0-3</id>
        <name>2</name>
        <sequence type="described" ref="VSP_033622 VSP_033623"/>
    </isoform>
</comment>
<comment type="domain">
    <text evidence="15">The RING finger domain is required for ubiquitin ligase activity and autoubiquitination.</text>
</comment>
<comment type="PTM">
    <text evidence="13">Phosphorylated at Ser-304 by AKT1 and AKT2. When phosphorylated, it has reduced ability to bind Rac.</text>
</comment>
<comment type="PTM">
    <text evidence="3 15">Autoubiquitinated (PubMed:20696164). Ubiquitinated by SH3RF2, leading to proteasome-mediated degradation (By similarity).</text>
</comment>
<comment type="similarity">
    <text evidence="18">Belongs to the SH3RF family.</text>
</comment>
<comment type="sequence caution" evidence="18">
    <conflict type="frameshift">
        <sequence resource="EMBL-CDS" id="AAH33203"/>
    </conflict>
</comment>
<comment type="sequence caution" evidence="18">
    <conflict type="miscellaneous discrepancy">
        <sequence resource="EMBL-CDS" id="AAH33203"/>
    </conflict>
    <text>Contaminating sequence. Potential poly-A sequence.</text>
</comment>
<comment type="sequence caution" evidence="18">
    <conflict type="miscellaneous discrepancy">
        <sequence resource="EMBL-CDS" id="AAH53671"/>
    </conflict>
    <text>Contaminating sequence. Sequence of unknown origin in the middle of the protein.</text>
</comment>
<organism>
    <name type="scientific">Homo sapiens</name>
    <name type="common">Human</name>
    <dbReference type="NCBI Taxonomy" id="9606"/>
    <lineage>
        <taxon>Eukaryota</taxon>
        <taxon>Metazoa</taxon>
        <taxon>Chordata</taxon>
        <taxon>Craniata</taxon>
        <taxon>Vertebrata</taxon>
        <taxon>Euteleostomi</taxon>
        <taxon>Mammalia</taxon>
        <taxon>Eutheria</taxon>
        <taxon>Euarchontoglires</taxon>
        <taxon>Primates</taxon>
        <taxon>Haplorrhini</taxon>
        <taxon>Catarrhini</taxon>
        <taxon>Hominidae</taxon>
        <taxon>Homo</taxon>
    </lineage>
</organism>
<feature type="chain" id="PRO_0000334151" description="E3 ubiquitin-protein ligase SH3RF1">
    <location>
        <begin position="1"/>
        <end position="888"/>
    </location>
</feature>
<feature type="domain" description="SH3 1" evidence="5">
    <location>
        <begin position="134"/>
        <end position="193"/>
    </location>
</feature>
<feature type="domain" description="SH3 2" evidence="5">
    <location>
        <begin position="196"/>
        <end position="259"/>
    </location>
</feature>
<feature type="domain" description="SH3 3" evidence="5">
    <location>
        <begin position="445"/>
        <end position="506"/>
    </location>
</feature>
<feature type="domain" description="SH3 4" evidence="5">
    <location>
        <begin position="829"/>
        <end position="888"/>
    </location>
</feature>
<feature type="zinc finger region" description="RING-type" evidence="4">
    <location>
        <begin position="12"/>
        <end position="53"/>
    </location>
</feature>
<feature type="region of interest" description="Disordered" evidence="6">
    <location>
        <begin position="108"/>
        <end position="128"/>
    </location>
</feature>
<feature type="region of interest" description="Disordered" evidence="6">
    <location>
        <begin position="275"/>
        <end position="321"/>
    </location>
</feature>
<feature type="region of interest" description="Interaction with RAC1" evidence="15">
    <location>
        <begin position="292"/>
        <end position="362"/>
    </location>
</feature>
<feature type="region of interest" description="Interaction with AKT2" evidence="1">
    <location>
        <begin position="440"/>
        <end position="543"/>
    </location>
</feature>
<feature type="region of interest" description="Disordered" evidence="6">
    <location>
        <begin position="516"/>
        <end position="548"/>
    </location>
</feature>
<feature type="region of interest" description="Disordered" evidence="6">
    <location>
        <begin position="620"/>
        <end position="639"/>
    </location>
</feature>
<feature type="region of interest" description="Disordered" evidence="6">
    <location>
        <begin position="684"/>
        <end position="741"/>
    </location>
</feature>
<feature type="compositionally biased region" description="Polar residues" evidence="6">
    <location>
        <begin position="108"/>
        <end position="127"/>
    </location>
</feature>
<feature type="compositionally biased region" description="Polar residues" evidence="6">
    <location>
        <begin position="305"/>
        <end position="321"/>
    </location>
</feature>
<feature type="compositionally biased region" description="Polar residues" evidence="6">
    <location>
        <begin position="520"/>
        <end position="535"/>
    </location>
</feature>
<feature type="compositionally biased region" description="Polar residues" evidence="6">
    <location>
        <begin position="692"/>
        <end position="704"/>
    </location>
</feature>
<feature type="compositionally biased region" description="Basic and acidic residues" evidence="6">
    <location>
        <begin position="707"/>
        <end position="718"/>
    </location>
</feature>
<feature type="modified residue" description="Phosphoserine" evidence="13 19 20">
    <location>
        <position position="304"/>
    </location>
</feature>
<feature type="modified residue" description="Phosphoserine" evidence="20">
    <location>
        <position position="532"/>
    </location>
</feature>
<feature type="modified residue" description="Phosphoserine" evidence="2">
    <location>
        <position position="735"/>
    </location>
</feature>
<feature type="splice variant" id="VSP_033622" description="In isoform 2." evidence="16">
    <original>TLNPPLPPPPLLAATVLASTPPGATAAAAAAGMGPRPMAGSTDQIAHL</original>
    <variation>APPPLLLLLEWDRGPWQDPLTRLHIYGRRLAPVCMLLYIHTLLGKRIN</variation>
    <location>
        <begin position="394"/>
        <end position="441"/>
    </location>
</feature>
<feature type="splice variant" id="VSP_033623" description="In isoform 2." evidence="16">
    <location>
        <begin position="442"/>
        <end position="888"/>
    </location>
</feature>
<feature type="sequence variant" id="VAR_043342" description="In dbSNP:rs3811813.">
    <original>P</original>
    <variation>S</variation>
    <location>
        <position position="663"/>
    </location>
</feature>
<feature type="mutagenesis site" description="Loss of Ubl activity." evidence="12">
    <original>V</original>
    <variation>A</variation>
    <location>
        <position position="14"/>
    </location>
</feature>
<feature type="mutagenesis site" description="Significant reduction in autoubiquitination; when associated with A-30." evidence="15">
    <original>C</original>
    <variation>A</variation>
    <location>
        <position position="28"/>
    </location>
</feature>
<feature type="mutagenesis site" description="Significant reduction in autoubiquitination; when associated with A-28." evidence="15">
    <original>H</original>
    <variation>A</variation>
    <location>
        <position position="30"/>
    </location>
</feature>
<feature type="mutagenesis site" description="Decreased level of phosphorylation and no change in the ability to induce apoptosis." evidence="13">
    <original>S</original>
    <variation>A</variation>
    <location>
        <position position="304"/>
    </location>
</feature>
<feature type="mutagenesis site" description="Decreased level of phosphorylation and Rac-binding ability and important loss of the ability to induce apoptosis." evidence="13">
    <original>S</original>
    <variation>D</variation>
    <location>
        <position position="304"/>
    </location>
</feature>
<feature type="mutagenesis site" description="Decreased Rac-binding ability." evidence="13">
    <original>S</original>
    <variation>E</variation>
    <location>
        <position position="304"/>
    </location>
</feature>
<dbReference type="EC" id="2.3.2.27" evidence="9 14 15"/>
<dbReference type="EMBL" id="BC033203">
    <property type="protein sequence ID" value="AAH33203.1"/>
    <property type="status" value="ALT_SEQ"/>
    <property type="molecule type" value="mRNA"/>
</dbReference>
<dbReference type="EMBL" id="BC041023">
    <property type="protein sequence ID" value="AAH41023.1"/>
    <property type="molecule type" value="mRNA"/>
</dbReference>
<dbReference type="EMBL" id="BC053671">
    <property type="protein sequence ID" value="AAH53671.1"/>
    <property type="status" value="ALT_SEQ"/>
    <property type="molecule type" value="mRNA"/>
</dbReference>
<dbReference type="EMBL" id="AK021429">
    <property type="protein sequence ID" value="BAB13822.1"/>
    <property type="molecule type" value="mRNA"/>
</dbReference>
<dbReference type="EMBL" id="AB040927">
    <property type="protein sequence ID" value="BAA96018.1"/>
    <property type="molecule type" value="mRNA"/>
</dbReference>
<dbReference type="CCDS" id="CCDS34099.1">
    <molecule id="Q7Z6J0-1"/>
</dbReference>
<dbReference type="RefSeq" id="NP_065921.2">
    <molecule id="Q7Z6J0-1"/>
    <property type="nucleotide sequence ID" value="NM_020870.3"/>
</dbReference>
<dbReference type="PDB" id="7NZC">
    <property type="method" value="X-ray"/>
    <property type="resolution" value="1.11 A"/>
    <property type="chains" value="AAA=135-194"/>
</dbReference>
<dbReference type="PDB" id="7NZD">
    <property type="method" value="X-ray"/>
    <property type="resolution" value="1.45 A"/>
    <property type="chains" value="AAA=829-888"/>
</dbReference>
<dbReference type="PDBsum" id="7NZC"/>
<dbReference type="PDBsum" id="7NZD"/>
<dbReference type="SMR" id="Q7Z6J0"/>
<dbReference type="BioGRID" id="121673">
    <property type="interactions" value="104"/>
</dbReference>
<dbReference type="CORUM" id="Q7Z6J0"/>
<dbReference type="DIP" id="DIP-31636N"/>
<dbReference type="ELM" id="Q7Z6J0"/>
<dbReference type="FunCoup" id="Q7Z6J0">
    <property type="interactions" value="562"/>
</dbReference>
<dbReference type="IntAct" id="Q7Z6J0">
    <property type="interactions" value="24"/>
</dbReference>
<dbReference type="MINT" id="Q7Z6J0"/>
<dbReference type="STRING" id="9606.ENSP00000284637"/>
<dbReference type="GlyCosmos" id="Q7Z6J0">
    <property type="glycosylation" value="4 sites, 1 glycan"/>
</dbReference>
<dbReference type="GlyGen" id="Q7Z6J0">
    <property type="glycosylation" value="8 sites, 1 O-linked glycan (8 sites)"/>
</dbReference>
<dbReference type="iPTMnet" id="Q7Z6J0"/>
<dbReference type="PhosphoSitePlus" id="Q7Z6J0"/>
<dbReference type="BioMuta" id="SH3RF1"/>
<dbReference type="DMDM" id="205830834"/>
<dbReference type="jPOST" id="Q7Z6J0"/>
<dbReference type="MassIVE" id="Q7Z6J0"/>
<dbReference type="PaxDb" id="9606-ENSP00000284637"/>
<dbReference type="PeptideAtlas" id="Q7Z6J0"/>
<dbReference type="ProteomicsDB" id="69417">
    <molecule id="Q7Z6J0-1"/>
</dbReference>
<dbReference type="ProteomicsDB" id="69418">
    <molecule id="Q7Z6J0-3"/>
</dbReference>
<dbReference type="Pumba" id="Q7Z6J0"/>
<dbReference type="ABCD" id="Q7Z6J0">
    <property type="antibodies" value="4 sequenced antibodies"/>
</dbReference>
<dbReference type="Antibodypedia" id="28449">
    <property type="antibodies" value="151 antibodies from 23 providers"/>
</dbReference>
<dbReference type="DNASU" id="57630"/>
<dbReference type="Ensembl" id="ENST00000284637.14">
    <molecule id="Q7Z6J0-1"/>
    <property type="protein sequence ID" value="ENSP00000284637.9"/>
    <property type="gene ID" value="ENSG00000154447.15"/>
</dbReference>
<dbReference type="GeneID" id="57630"/>
<dbReference type="KEGG" id="hsa:57630"/>
<dbReference type="MANE-Select" id="ENST00000284637.14">
    <property type="protein sequence ID" value="ENSP00000284637.9"/>
    <property type="RefSeq nucleotide sequence ID" value="NM_020870.4"/>
    <property type="RefSeq protein sequence ID" value="NP_065921.2"/>
</dbReference>
<dbReference type="UCSC" id="uc003isa.2">
    <molecule id="Q7Z6J0-1"/>
    <property type="organism name" value="human"/>
</dbReference>
<dbReference type="AGR" id="HGNC:17650"/>
<dbReference type="CTD" id="57630"/>
<dbReference type="DisGeNET" id="57630"/>
<dbReference type="GeneCards" id="SH3RF1"/>
<dbReference type="HGNC" id="HGNC:17650">
    <property type="gene designation" value="SH3RF1"/>
</dbReference>
<dbReference type="HPA" id="ENSG00000154447">
    <property type="expression patterns" value="Low tissue specificity"/>
</dbReference>
<dbReference type="MIM" id="618642">
    <property type="type" value="gene"/>
</dbReference>
<dbReference type="neXtProt" id="NX_Q7Z6J0"/>
<dbReference type="OpenTargets" id="ENSG00000154447"/>
<dbReference type="PharmGKB" id="PA134915904"/>
<dbReference type="VEuPathDB" id="HostDB:ENSG00000154447"/>
<dbReference type="eggNOG" id="KOG2177">
    <property type="taxonomic scope" value="Eukaryota"/>
</dbReference>
<dbReference type="GeneTree" id="ENSGT00940000155875"/>
<dbReference type="HOGENOM" id="CLU_015769_1_0_1"/>
<dbReference type="InParanoid" id="Q7Z6J0"/>
<dbReference type="OMA" id="HKQRRFL"/>
<dbReference type="OrthoDB" id="19092at2759"/>
<dbReference type="PAN-GO" id="Q7Z6J0">
    <property type="GO annotations" value="6 GO annotations based on evolutionary models"/>
</dbReference>
<dbReference type="PhylomeDB" id="Q7Z6J0"/>
<dbReference type="TreeFam" id="TF105571"/>
<dbReference type="PathwayCommons" id="Q7Z6J0"/>
<dbReference type="Reactome" id="R-HSA-9013424">
    <property type="pathway name" value="RHOV GTPase cycle"/>
</dbReference>
<dbReference type="Reactome" id="R-HSA-983168">
    <property type="pathway name" value="Antigen processing: Ubiquitination &amp; Proteasome degradation"/>
</dbReference>
<dbReference type="SignaLink" id="Q7Z6J0"/>
<dbReference type="SIGNOR" id="Q7Z6J0"/>
<dbReference type="UniPathway" id="UPA00143"/>
<dbReference type="BioGRID-ORCS" id="57630">
    <property type="hits" value="11 hits in 1187 CRISPR screens"/>
</dbReference>
<dbReference type="ChiTaRS" id="SH3RF1">
    <property type="organism name" value="human"/>
</dbReference>
<dbReference type="GeneWiki" id="SH3RF1"/>
<dbReference type="GenomeRNAi" id="57630"/>
<dbReference type="Pharos" id="Q7Z6J0">
    <property type="development level" value="Tbio"/>
</dbReference>
<dbReference type="PRO" id="PR:Q7Z6J0"/>
<dbReference type="Proteomes" id="UP000005640">
    <property type="component" value="Chromosome 4"/>
</dbReference>
<dbReference type="RNAct" id="Q7Z6J0">
    <property type="molecule type" value="protein"/>
</dbReference>
<dbReference type="Bgee" id="ENSG00000154447">
    <property type="expression patterns" value="Expressed in epithelial cell of pancreas and 182 other cell types or tissues"/>
</dbReference>
<dbReference type="ExpressionAtlas" id="Q7Z6J0">
    <property type="expression patterns" value="baseline and differential"/>
</dbReference>
<dbReference type="GO" id="GO:0005829">
    <property type="term" value="C:cytosol"/>
    <property type="evidence" value="ECO:0000314"/>
    <property type="project" value="UniProtKB"/>
</dbReference>
<dbReference type="GO" id="GO:0005794">
    <property type="term" value="C:Golgi apparatus"/>
    <property type="evidence" value="ECO:0007669"/>
    <property type="project" value="UniProtKB-SubCell"/>
</dbReference>
<dbReference type="GO" id="GO:0030027">
    <property type="term" value="C:lamellipodium"/>
    <property type="evidence" value="ECO:0000250"/>
    <property type="project" value="UniProtKB"/>
</dbReference>
<dbReference type="GO" id="GO:0048471">
    <property type="term" value="C:perinuclear region of cytoplasm"/>
    <property type="evidence" value="ECO:0007669"/>
    <property type="project" value="UniProtKB-SubCell"/>
</dbReference>
<dbReference type="GO" id="GO:0005078">
    <property type="term" value="F:MAP-kinase scaffold activity"/>
    <property type="evidence" value="ECO:0000250"/>
    <property type="project" value="UniProtKB"/>
</dbReference>
<dbReference type="GO" id="GO:0061630">
    <property type="term" value="F:ubiquitin protein ligase activity"/>
    <property type="evidence" value="ECO:0000315"/>
    <property type="project" value="UniProtKB"/>
</dbReference>
<dbReference type="GO" id="GO:0008270">
    <property type="term" value="F:zinc ion binding"/>
    <property type="evidence" value="ECO:0007669"/>
    <property type="project" value="UniProtKB-KW"/>
</dbReference>
<dbReference type="GO" id="GO:0043066">
    <property type="term" value="P:negative regulation of apoptotic process"/>
    <property type="evidence" value="ECO:0000315"/>
    <property type="project" value="UniProtKB"/>
</dbReference>
<dbReference type="GO" id="GO:2001237">
    <property type="term" value="P:negative regulation of extrinsic apoptotic signaling pathway"/>
    <property type="evidence" value="ECO:0000315"/>
    <property type="project" value="UniProtKB"/>
</dbReference>
<dbReference type="GO" id="GO:0001764">
    <property type="term" value="P:neuron migration"/>
    <property type="evidence" value="ECO:0000250"/>
    <property type="project" value="UniProtKB"/>
</dbReference>
<dbReference type="GO" id="GO:0046330">
    <property type="term" value="P:positive regulation of JNK cascade"/>
    <property type="evidence" value="ECO:0000250"/>
    <property type="project" value="UniProtKB"/>
</dbReference>
<dbReference type="GO" id="GO:0032436">
    <property type="term" value="P:positive regulation of proteasomal ubiquitin-dependent protein catabolic process"/>
    <property type="evidence" value="ECO:0000318"/>
    <property type="project" value="GO_Central"/>
</dbReference>
<dbReference type="GO" id="GO:0051865">
    <property type="term" value="P:protein autoubiquitination"/>
    <property type="evidence" value="ECO:0000315"/>
    <property type="project" value="UniProtKB"/>
</dbReference>
<dbReference type="GO" id="GO:0016567">
    <property type="term" value="P:protein ubiquitination"/>
    <property type="evidence" value="ECO:0000318"/>
    <property type="project" value="GO_Central"/>
</dbReference>
<dbReference type="GO" id="GO:0043370">
    <property type="term" value="P:regulation of CD4-positive, alpha-beta T cell differentiation"/>
    <property type="evidence" value="ECO:0000250"/>
    <property type="project" value="UniProtKB"/>
</dbReference>
<dbReference type="GO" id="GO:2000564">
    <property type="term" value="P:regulation of CD8-positive, alpha-beta T cell proliferation"/>
    <property type="evidence" value="ECO:0000250"/>
    <property type="project" value="UniProtKB"/>
</dbReference>
<dbReference type="GO" id="GO:1904044">
    <property type="term" value="P:response to aldosterone"/>
    <property type="evidence" value="ECO:0007669"/>
    <property type="project" value="Ensembl"/>
</dbReference>
<dbReference type="CDD" id="cd16748">
    <property type="entry name" value="RING-HC_SH3RF1"/>
    <property type="match status" value="1"/>
</dbReference>
<dbReference type="CDD" id="cd11930">
    <property type="entry name" value="SH3_SH3RF1_2"/>
    <property type="match status" value="1"/>
</dbReference>
<dbReference type="CDD" id="cd11926">
    <property type="entry name" value="SH3_SH3RF1_3"/>
    <property type="match status" value="1"/>
</dbReference>
<dbReference type="CDD" id="cd11785">
    <property type="entry name" value="SH3_SH3RF_C"/>
    <property type="match status" value="1"/>
</dbReference>
<dbReference type="FunFam" id="3.30.40.10:FF:000077">
    <property type="entry name" value="E3 ubiquitin-protein ligase SH3RF1 isoform X1"/>
    <property type="match status" value="1"/>
</dbReference>
<dbReference type="FunFam" id="2.30.30.40:FF:000063">
    <property type="entry name" value="Putative E3 ubiquitin-protein ligase SH3RF1"/>
    <property type="match status" value="1"/>
</dbReference>
<dbReference type="FunFam" id="2.30.30.40:FF:000091">
    <property type="entry name" value="Putative E3 ubiquitin-protein ligase SH3RF1"/>
    <property type="match status" value="1"/>
</dbReference>
<dbReference type="FunFam" id="2.30.30.40:FF:000118">
    <property type="entry name" value="Putative E3 ubiquitin-protein ligase SH3RF1"/>
    <property type="match status" value="1"/>
</dbReference>
<dbReference type="FunFam" id="2.30.30.40:FF:000001">
    <property type="entry name" value="Sorbin and SH3 domain-containing protein 1 isoform 2"/>
    <property type="match status" value="1"/>
</dbReference>
<dbReference type="Gene3D" id="2.30.30.40">
    <property type="entry name" value="SH3 Domains"/>
    <property type="match status" value="4"/>
</dbReference>
<dbReference type="Gene3D" id="3.30.40.10">
    <property type="entry name" value="Zinc/RING finger domain, C3HC4 (zinc finger)"/>
    <property type="match status" value="1"/>
</dbReference>
<dbReference type="InterPro" id="IPR050384">
    <property type="entry name" value="Endophilin_SH3RF"/>
</dbReference>
<dbReference type="InterPro" id="IPR036028">
    <property type="entry name" value="SH3-like_dom_sf"/>
</dbReference>
<dbReference type="InterPro" id="IPR001452">
    <property type="entry name" value="SH3_domain"/>
</dbReference>
<dbReference type="InterPro" id="IPR035816">
    <property type="entry name" value="SH3RF1/SH3RF3_SH3_4"/>
</dbReference>
<dbReference type="InterPro" id="IPR035795">
    <property type="entry name" value="SH3RF1_SH3_2"/>
</dbReference>
<dbReference type="InterPro" id="IPR001841">
    <property type="entry name" value="Znf_RING"/>
</dbReference>
<dbReference type="InterPro" id="IPR013083">
    <property type="entry name" value="Znf_RING/FYVE/PHD"/>
</dbReference>
<dbReference type="InterPro" id="IPR017907">
    <property type="entry name" value="Znf_RING_CS"/>
</dbReference>
<dbReference type="PANTHER" id="PTHR14167:SF116">
    <property type="entry name" value="CAP, ISOFORM AC"/>
    <property type="match status" value="1"/>
</dbReference>
<dbReference type="PANTHER" id="PTHR14167">
    <property type="entry name" value="SH3 DOMAIN-CONTAINING"/>
    <property type="match status" value="1"/>
</dbReference>
<dbReference type="Pfam" id="PF00018">
    <property type="entry name" value="SH3_1"/>
    <property type="match status" value="2"/>
</dbReference>
<dbReference type="Pfam" id="PF14604">
    <property type="entry name" value="SH3_9"/>
    <property type="match status" value="2"/>
</dbReference>
<dbReference type="Pfam" id="PF13923">
    <property type="entry name" value="zf-C3HC4_2"/>
    <property type="match status" value="1"/>
</dbReference>
<dbReference type="PRINTS" id="PR00499">
    <property type="entry name" value="P67PHOX"/>
</dbReference>
<dbReference type="PRINTS" id="PR00452">
    <property type="entry name" value="SH3DOMAIN"/>
</dbReference>
<dbReference type="SMART" id="SM00184">
    <property type="entry name" value="RING"/>
    <property type="match status" value="1"/>
</dbReference>
<dbReference type="SMART" id="SM00326">
    <property type="entry name" value="SH3"/>
    <property type="match status" value="4"/>
</dbReference>
<dbReference type="SUPFAM" id="SSF57850">
    <property type="entry name" value="RING/U-box"/>
    <property type="match status" value="1"/>
</dbReference>
<dbReference type="SUPFAM" id="SSF50044">
    <property type="entry name" value="SH3-domain"/>
    <property type="match status" value="4"/>
</dbReference>
<dbReference type="PROSITE" id="PS50002">
    <property type="entry name" value="SH3"/>
    <property type="match status" value="4"/>
</dbReference>
<dbReference type="PROSITE" id="PS00518">
    <property type="entry name" value="ZF_RING_1"/>
    <property type="match status" value="1"/>
</dbReference>
<dbReference type="PROSITE" id="PS50089">
    <property type="entry name" value="ZF_RING_2"/>
    <property type="match status" value="1"/>
</dbReference>
<sequence length="888" mass="93129">MDESALLDLLECPVCLERLDASAKVLPCQHTFCKRCLLGIVGSRNELRCPECRTLVGSGVEELPSNILLVRLLDGIKQRPWKPGPGGGSGTNCTNALRSQSSTVANCSSKDLQSSQGGQQPRVQSWSPPVRGIPQLPCAKALYNYEGKEPGDLKFSKGDIIILRRQVDENWYHGEVNGIHGFFPTNFVQIIKPLPQPPPQCKALYDFEVKDKEADKDCLPFAKDDVLTVIRRVDENWAEGMLADKIGIFPISYVEFNSAAKQLIEWDKPPVPGVDAGECSSAAAQSSTAPKHSDTKKNTKKRHSFTSLTMANKSSQASQNRHSMEISPPVLISSSNPTAAARISELSGLSCSAPSQVHISTTGLIVTPPPSSPVTTGPSFTFPSDVPYQAALGTLNPPLPPPPLLAATVLASTPPGATAAAAAAGMGPRPMAGSTDQIAHLRPQTRPSVYVAIYPYTPRKEDELELRKGEMFLVFERCQDGWFKGTSMHTSKIGVFPGNYVAPVTRAVTNASQAKVPMSTAGQTSRGVTMVSPSTAGGPAQKLQGNGVAGSPSVVPAAVVSAAHIQTSPQAKVLLHMTGQMTVNQARNAVRTVAAHNQERPTAAVTPIQVQNAAGLSPASVGLSHHSLASPQPAPLMPGSATHTAAISISRASAPLACAAAAPLTSPSITSASLEAEPSGRIVTVLPGLPTSPDSASSACGNSSATKPDKDSKKEKKGLLKLLSGASTKRKPRVSPPASPTLEVELGSAELPLQGAVGPELPPGGGHGRAGSCPVDGDGPVTTAVAGAALAQDAFHRKASSLDSAVPIAPPPRQACSSLGPVLNESRPVVCERHRVVVSYPPQSEAELELKEGDIVFVHKKREDGWFKGTLQRNGKTGLFPGSFVENI</sequence>
<keyword id="KW-0002">3D-structure</keyword>
<keyword id="KW-0025">Alternative splicing</keyword>
<keyword id="KW-0966">Cell projection</keyword>
<keyword id="KW-0963">Cytoplasm</keyword>
<keyword id="KW-0333">Golgi apparatus</keyword>
<keyword id="KW-0945">Host-virus interaction</keyword>
<keyword id="KW-0479">Metal-binding</keyword>
<keyword id="KW-0597">Phosphoprotein</keyword>
<keyword id="KW-1267">Proteomics identification</keyword>
<keyword id="KW-1185">Reference proteome</keyword>
<keyword id="KW-0677">Repeat</keyword>
<keyword id="KW-0728">SH3 domain</keyword>
<keyword id="KW-0808">Transferase</keyword>
<keyword id="KW-0832">Ubl conjugation</keyword>
<keyword id="KW-0833">Ubl conjugation pathway</keyword>
<keyword id="KW-0862">Zinc</keyword>
<keyword id="KW-0863">Zinc-finger</keyword>